<proteinExistence type="inferred from homology"/>
<dbReference type="EC" id="6.1.1.17" evidence="1"/>
<dbReference type="EMBL" id="AE009442">
    <property type="protein sequence ID" value="AAO29680.1"/>
    <property type="molecule type" value="Genomic_DNA"/>
</dbReference>
<dbReference type="RefSeq" id="WP_004088131.1">
    <property type="nucleotide sequence ID" value="NC_004556.1"/>
</dbReference>
<dbReference type="SMR" id="Q87AH7"/>
<dbReference type="GeneID" id="93905704"/>
<dbReference type="KEGG" id="xft:PD_1848"/>
<dbReference type="HOGENOM" id="CLU_015768_6_0_6"/>
<dbReference type="Proteomes" id="UP000002516">
    <property type="component" value="Chromosome"/>
</dbReference>
<dbReference type="GO" id="GO:0005829">
    <property type="term" value="C:cytosol"/>
    <property type="evidence" value="ECO:0007669"/>
    <property type="project" value="TreeGrafter"/>
</dbReference>
<dbReference type="GO" id="GO:0005524">
    <property type="term" value="F:ATP binding"/>
    <property type="evidence" value="ECO:0007669"/>
    <property type="project" value="UniProtKB-UniRule"/>
</dbReference>
<dbReference type="GO" id="GO:0004818">
    <property type="term" value="F:glutamate-tRNA ligase activity"/>
    <property type="evidence" value="ECO:0007669"/>
    <property type="project" value="UniProtKB-UniRule"/>
</dbReference>
<dbReference type="GO" id="GO:0000049">
    <property type="term" value="F:tRNA binding"/>
    <property type="evidence" value="ECO:0007669"/>
    <property type="project" value="InterPro"/>
</dbReference>
<dbReference type="GO" id="GO:0008270">
    <property type="term" value="F:zinc ion binding"/>
    <property type="evidence" value="ECO:0007669"/>
    <property type="project" value="InterPro"/>
</dbReference>
<dbReference type="GO" id="GO:0006424">
    <property type="term" value="P:glutamyl-tRNA aminoacylation"/>
    <property type="evidence" value="ECO:0007669"/>
    <property type="project" value="UniProtKB-UniRule"/>
</dbReference>
<dbReference type="CDD" id="cd00808">
    <property type="entry name" value="GluRS_core"/>
    <property type="match status" value="1"/>
</dbReference>
<dbReference type="FunFam" id="3.40.50.620:FF:000007">
    <property type="entry name" value="Glutamate--tRNA ligase"/>
    <property type="match status" value="1"/>
</dbReference>
<dbReference type="Gene3D" id="1.10.10.350">
    <property type="match status" value="1"/>
</dbReference>
<dbReference type="Gene3D" id="3.40.50.620">
    <property type="entry name" value="HUPs"/>
    <property type="match status" value="1"/>
</dbReference>
<dbReference type="HAMAP" id="MF_00022">
    <property type="entry name" value="Glu_tRNA_synth_type1"/>
    <property type="match status" value="1"/>
</dbReference>
<dbReference type="InterPro" id="IPR045462">
    <property type="entry name" value="aa-tRNA-synth_I_cd-bd"/>
</dbReference>
<dbReference type="InterPro" id="IPR020751">
    <property type="entry name" value="aa-tRNA-synth_I_codon-bd_sub2"/>
</dbReference>
<dbReference type="InterPro" id="IPR001412">
    <property type="entry name" value="aa-tRNA-synth_I_CS"/>
</dbReference>
<dbReference type="InterPro" id="IPR008925">
    <property type="entry name" value="aa_tRNA-synth_I_cd-bd_sf"/>
</dbReference>
<dbReference type="InterPro" id="IPR004527">
    <property type="entry name" value="Glu-tRNA-ligase_bac/mito"/>
</dbReference>
<dbReference type="InterPro" id="IPR000924">
    <property type="entry name" value="Glu/Gln-tRNA-synth"/>
</dbReference>
<dbReference type="InterPro" id="IPR020058">
    <property type="entry name" value="Glu/Gln-tRNA-synth_Ib_cat-dom"/>
</dbReference>
<dbReference type="InterPro" id="IPR049940">
    <property type="entry name" value="GluQ/Sye"/>
</dbReference>
<dbReference type="InterPro" id="IPR033910">
    <property type="entry name" value="GluRS_core"/>
</dbReference>
<dbReference type="InterPro" id="IPR014729">
    <property type="entry name" value="Rossmann-like_a/b/a_fold"/>
</dbReference>
<dbReference type="NCBIfam" id="TIGR00464">
    <property type="entry name" value="gltX_bact"/>
    <property type="match status" value="1"/>
</dbReference>
<dbReference type="PANTHER" id="PTHR43311">
    <property type="entry name" value="GLUTAMATE--TRNA LIGASE"/>
    <property type="match status" value="1"/>
</dbReference>
<dbReference type="PANTHER" id="PTHR43311:SF2">
    <property type="entry name" value="GLUTAMATE--TRNA LIGASE, MITOCHONDRIAL-RELATED"/>
    <property type="match status" value="1"/>
</dbReference>
<dbReference type="Pfam" id="PF19269">
    <property type="entry name" value="Anticodon_2"/>
    <property type="match status" value="1"/>
</dbReference>
<dbReference type="Pfam" id="PF00749">
    <property type="entry name" value="tRNA-synt_1c"/>
    <property type="match status" value="1"/>
</dbReference>
<dbReference type="PRINTS" id="PR00987">
    <property type="entry name" value="TRNASYNTHGLU"/>
</dbReference>
<dbReference type="SUPFAM" id="SSF48163">
    <property type="entry name" value="An anticodon-binding domain of class I aminoacyl-tRNA synthetases"/>
    <property type="match status" value="1"/>
</dbReference>
<dbReference type="SUPFAM" id="SSF52374">
    <property type="entry name" value="Nucleotidylyl transferase"/>
    <property type="match status" value="1"/>
</dbReference>
<dbReference type="PROSITE" id="PS00178">
    <property type="entry name" value="AA_TRNA_LIGASE_I"/>
    <property type="match status" value="1"/>
</dbReference>
<comment type="function">
    <text evidence="1">Catalyzes the attachment of glutamate to tRNA(Glu) in a two-step reaction: glutamate is first activated by ATP to form Glu-AMP and then transferred to the acceptor end of tRNA(Glu).</text>
</comment>
<comment type="catalytic activity">
    <reaction evidence="1">
        <text>tRNA(Glu) + L-glutamate + ATP = L-glutamyl-tRNA(Glu) + AMP + diphosphate</text>
        <dbReference type="Rhea" id="RHEA:23540"/>
        <dbReference type="Rhea" id="RHEA-COMP:9663"/>
        <dbReference type="Rhea" id="RHEA-COMP:9680"/>
        <dbReference type="ChEBI" id="CHEBI:29985"/>
        <dbReference type="ChEBI" id="CHEBI:30616"/>
        <dbReference type="ChEBI" id="CHEBI:33019"/>
        <dbReference type="ChEBI" id="CHEBI:78442"/>
        <dbReference type="ChEBI" id="CHEBI:78520"/>
        <dbReference type="ChEBI" id="CHEBI:456215"/>
        <dbReference type="EC" id="6.1.1.17"/>
    </reaction>
</comment>
<comment type="subunit">
    <text evidence="1">Monomer.</text>
</comment>
<comment type="subcellular location">
    <subcellularLocation>
        <location evidence="1">Cytoplasm</location>
    </subcellularLocation>
</comment>
<comment type="similarity">
    <text evidence="1">Belongs to the class-I aminoacyl-tRNA synthetase family. Glutamate--tRNA ligase type 1 subfamily.</text>
</comment>
<reference key="1">
    <citation type="journal article" date="2003" name="J. Bacteriol.">
        <title>Comparative analyses of the complete genome sequences of Pierce's disease and citrus variegated chlorosis strains of Xylella fastidiosa.</title>
        <authorList>
            <person name="Van Sluys M.A."/>
            <person name="de Oliveira M.C."/>
            <person name="Monteiro-Vitorello C.B."/>
            <person name="Miyaki C.Y."/>
            <person name="Furlan L.R."/>
            <person name="Camargo L.E.A."/>
            <person name="da Silva A.C.R."/>
            <person name="Moon D.H."/>
            <person name="Takita M.A."/>
            <person name="Lemos E.G.M."/>
            <person name="Machado M.A."/>
            <person name="Ferro M.I.T."/>
            <person name="da Silva F.R."/>
            <person name="Goldman M.H.S."/>
            <person name="Goldman G.H."/>
            <person name="Lemos M.V.F."/>
            <person name="El-Dorry H."/>
            <person name="Tsai S.M."/>
            <person name="Carrer H."/>
            <person name="Carraro D.M."/>
            <person name="de Oliveira R.C."/>
            <person name="Nunes L.R."/>
            <person name="Siqueira W.J."/>
            <person name="Coutinho L.L."/>
            <person name="Kimura E.T."/>
            <person name="Ferro E.S."/>
            <person name="Harakava R."/>
            <person name="Kuramae E.E."/>
            <person name="Marino C.L."/>
            <person name="Giglioti E."/>
            <person name="Abreu I.L."/>
            <person name="Alves L.M.C."/>
            <person name="do Amaral A.M."/>
            <person name="Baia G.S."/>
            <person name="Blanco S.R."/>
            <person name="Brito M.S."/>
            <person name="Cannavan F.S."/>
            <person name="Celestino A.V."/>
            <person name="da Cunha A.F."/>
            <person name="Fenille R.C."/>
            <person name="Ferro J.A."/>
            <person name="Formighieri E.F."/>
            <person name="Kishi L.T."/>
            <person name="Leoni S.G."/>
            <person name="Oliveira A.R."/>
            <person name="Rosa V.E. Jr."/>
            <person name="Sassaki F.T."/>
            <person name="Sena J.A.D."/>
            <person name="de Souza A.A."/>
            <person name="Truffi D."/>
            <person name="Tsukumo F."/>
            <person name="Yanai G.M."/>
            <person name="Zaros L.G."/>
            <person name="Civerolo E.L."/>
            <person name="Simpson A.J.G."/>
            <person name="Almeida N.F. Jr."/>
            <person name="Setubal J.C."/>
            <person name="Kitajima J.P."/>
        </authorList>
    </citation>
    <scope>NUCLEOTIDE SEQUENCE [LARGE SCALE GENOMIC DNA]</scope>
    <source>
        <strain>Temecula1 / ATCC 700964</strain>
    </source>
</reference>
<gene>
    <name evidence="1" type="primary">gltX</name>
    <name type="ordered locus">PD_1848</name>
</gene>
<organism>
    <name type="scientific">Xylella fastidiosa (strain Temecula1 / ATCC 700964)</name>
    <dbReference type="NCBI Taxonomy" id="183190"/>
    <lineage>
        <taxon>Bacteria</taxon>
        <taxon>Pseudomonadati</taxon>
        <taxon>Pseudomonadota</taxon>
        <taxon>Gammaproteobacteria</taxon>
        <taxon>Lysobacterales</taxon>
        <taxon>Lysobacteraceae</taxon>
        <taxon>Xylella</taxon>
    </lineage>
</organism>
<evidence type="ECO:0000255" key="1">
    <source>
        <dbReference type="HAMAP-Rule" id="MF_00022"/>
    </source>
</evidence>
<name>SYE_XYLFT</name>
<feature type="chain" id="PRO_0000119707" description="Glutamate--tRNA ligase">
    <location>
        <begin position="1"/>
        <end position="467"/>
    </location>
</feature>
<feature type="short sequence motif" description="'HIGH' region" evidence="1">
    <location>
        <begin position="9"/>
        <end position="19"/>
    </location>
</feature>
<feature type="short sequence motif" description="'KMSKS' region" evidence="1">
    <location>
        <begin position="237"/>
        <end position="241"/>
    </location>
</feature>
<feature type="binding site" evidence="1">
    <location>
        <position position="240"/>
    </location>
    <ligand>
        <name>ATP</name>
        <dbReference type="ChEBI" id="CHEBI:30616"/>
    </ligand>
</feature>
<sequence length="467" mass="52501">MTCRTRFAPSPTGYLHIGGARTALYCWLEARRRNGQFLLRIEDTDRERSTQAAIDAILHAMDWLGLDYDEPPVYQTQRIERYNQVAARLLAEGKAYYAYDSKDTLNAMREAALRTGEKPRYNGAAREANLPYRDDPNRVIRFKNPHTGTVAFDDLIKGRIQISNSELDDMVILRPDGYPTYNFAVVVDDWDMNITEVIRGDDHINNTPRQINLYHALGAPLPTFAHLPMILDEQGAKLSKRTGAADVMQYRDSGYLPHALINYLVRLGWSHGDQELFNRQALIDLFQINDVNSKAARLDMAKLGWVNQHYLKTDDPATLAPPLVWHLEQRGIDVSAGPAPTDVILALRERVQTLKEMAEKAEIWYCPLQRYDEIAVAKHLKPGAETALLHARTLLAALPAWTVDNVDTALRTTATTLEIGMGKVAQPLRVAITGTQVSPDIAYTVYLTGRNEALKRIDAALIKISTA</sequence>
<accession>Q87AH7</accession>
<protein>
    <recommendedName>
        <fullName evidence="1">Glutamate--tRNA ligase</fullName>
        <ecNumber evidence="1">6.1.1.17</ecNumber>
    </recommendedName>
    <alternativeName>
        <fullName evidence="1">Glutamyl-tRNA synthetase</fullName>
        <shortName evidence="1">GluRS</shortName>
    </alternativeName>
</protein>
<keyword id="KW-0030">Aminoacyl-tRNA synthetase</keyword>
<keyword id="KW-0067">ATP-binding</keyword>
<keyword id="KW-0963">Cytoplasm</keyword>
<keyword id="KW-0436">Ligase</keyword>
<keyword id="KW-0547">Nucleotide-binding</keyword>
<keyword id="KW-0648">Protein biosynthesis</keyword>
<keyword id="KW-1185">Reference proteome</keyword>